<comment type="function">
    <text evidence="1">Catalyzes the transfer of a dimethylallyl group onto the adenine at position 37 in tRNAs that read codons beginning with uridine, leading to the formation of N6-(dimethylallyl)adenosine (i(6)A).</text>
</comment>
<comment type="catalytic activity">
    <reaction evidence="1">
        <text>adenosine(37) in tRNA + dimethylallyl diphosphate = N(6)-dimethylallyladenosine(37) in tRNA + diphosphate</text>
        <dbReference type="Rhea" id="RHEA:26482"/>
        <dbReference type="Rhea" id="RHEA-COMP:10162"/>
        <dbReference type="Rhea" id="RHEA-COMP:10375"/>
        <dbReference type="ChEBI" id="CHEBI:33019"/>
        <dbReference type="ChEBI" id="CHEBI:57623"/>
        <dbReference type="ChEBI" id="CHEBI:74411"/>
        <dbReference type="ChEBI" id="CHEBI:74415"/>
        <dbReference type="EC" id="2.5.1.75"/>
    </reaction>
</comment>
<comment type="cofactor">
    <cofactor evidence="1">
        <name>Mg(2+)</name>
        <dbReference type="ChEBI" id="CHEBI:18420"/>
    </cofactor>
</comment>
<comment type="subunit">
    <text evidence="1">Monomer.</text>
</comment>
<comment type="similarity">
    <text evidence="1">Belongs to the IPP transferase family.</text>
</comment>
<protein>
    <recommendedName>
        <fullName evidence="1">tRNA dimethylallyltransferase</fullName>
        <ecNumber evidence="1">2.5.1.75</ecNumber>
    </recommendedName>
    <alternativeName>
        <fullName evidence="1">Dimethylallyl diphosphate:tRNA dimethylallyltransferase</fullName>
        <shortName evidence="1">DMAPP:tRNA dimethylallyltransferase</shortName>
        <shortName evidence="1">DMATase</shortName>
    </alternativeName>
    <alternativeName>
        <fullName evidence="1">Isopentenyl-diphosphate:tRNA isopentenyltransferase</fullName>
        <shortName evidence="1">IPP transferase</shortName>
        <shortName evidence="1">IPPT</shortName>
        <shortName evidence="1">IPTase</shortName>
    </alternativeName>
</protein>
<gene>
    <name evidence="1" type="primary">miaA</name>
    <name type="ordered locus">Gmet_2052</name>
</gene>
<organism>
    <name type="scientific">Geobacter metallireducens (strain ATCC 53774 / DSM 7210 / GS-15)</name>
    <dbReference type="NCBI Taxonomy" id="269799"/>
    <lineage>
        <taxon>Bacteria</taxon>
        <taxon>Pseudomonadati</taxon>
        <taxon>Thermodesulfobacteriota</taxon>
        <taxon>Desulfuromonadia</taxon>
        <taxon>Geobacterales</taxon>
        <taxon>Geobacteraceae</taxon>
        <taxon>Geobacter</taxon>
    </lineage>
</organism>
<feature type="chain" id="PRO_0000377171" description="tRNA dimethylallyltransferase">
    <location>
        <begin position="1"/>
        <end position="309"/>
    </location>
</feature>
<feature type="region of interest" description="Interaction with substrate tRNA" evidence="1">
    <location>
        <begin position="39"/>
        <end position="42"/>
    </location>
</feature>
<feature type="binding site" evidence="1">
    <location>
        <begin position="14"/>
        <end position="21"/>
    </location>
    <ligand>
        <name>ATP</name>
        <dbReference type="ChEBI" id="CHEBI:30616"/>
    </ligand>
</feature>
<feature type="binding site" evidence="1">
    <location>
        <begin position="16"/>
        <end position="21"/>
    </location>
    <ligand>
        <name>substrate</name>
    </ligand>
</feature>
<feature type="site" description="Interaction with substrate tRNA" evidence="1">
    <location>
        <position position="105"/>
    </location>
</feature>
<feature type="site" description="Interaction with substrate tRNA" evidence="1">
    <location>
        <position position="127"/>
    </location>
</feature>
<evidence type="ECO:0000255" key="1">
    <source>
        <dbReference type="HAMAP-Rule" id="MF_00185"/>
    </source>
</evidence>
<proteinExistence type="inferred from homology"/>
<keyword id="KW-0067">ATP-binding</keyword>
<keyword id="KW-0460">Magnesium</keyword>
<keyword id="KW-0547">Nucleotide-binding</keyword>
<keyword id="KW-1185">Reference proteome</keyword>
<keyword id="KW-0808">Transferase</keyword>
<keyword id="KW-0819">tRNA processing</keyword>
<sequence length="309" mass="34822">MKEEEKTRLVIVQGPTASGKSALALELAERIGGEIVNADSMQVYRGMDIGTAKPSQEERRRVPHHLYDIVDPKVNFTAADFREHASRAIADIERRGKRVILVGGTGLYIRILTQGLVASPGGDDNIRRELEDQAHGEGLESLHRRLAAVDPVAAARLHPNDGVRIVRALEVFLLTGRPLSAFQEAHRFADEPYRCLKLGITVERELLYRRVEERVDRMIAEGLVEEVRGLLSAGYPATLKAMGSIGYREICAHLAGEFSLDEAMRLIKQNTRQYAKRQMTWFRRDSEIIWVEYPGKFDSILSTVMGFYH</sequence>
<name>MIAA_GEOMG</name>
<accession>Q39TZ3</accession>
<dbReference type="EC" id="2.5.1.75" evidence="1"/>
<dbReference type="EMBL" id="CP000148">
    <property type="protein sequence ID" value="ABB32281.1"/>
    <property type="molecule type" value="Genomic_DNA"/>
</dbReference>
<dbReference type="RefSeq" id="WP_004514052.1">
    <property type="nucleotide sequence ID" value="NC_007517.1"/>
</dbReference>
<dbReference type="SMR" id="Q39TZ3"/>
<dbReference type="STRING" id="269799.Gmet_2052"/>
<dbReference type="KEGG" id="gme:Gmet_2052"/>
<dbReference type="eggNOG" id="COG0324">
    <property type="taxonomic scope" value="Bacteria"/>
</dbReference>
<dbReference type="HOGENOM" id="CLU_032616_0_1_7"/>
<dbReference type="Proteomes" id="UP000007073">
    <property type="component" value="Chromosome"/>
</dbReference>
<dbReference type="GO" id="GO:0005524">
    <property type="term" value="F:ATP binding"/>
    <property type="evidence" value="ECO:0007669"/>
    <property type="project" value="UniProtKB-UniRule"/>
</dbReference>
<dbReference type="GO" id="GO:0052381">
    <property type="term" value="F:tRNA dimethylallyltransferase activity"/>
    <property type="evidence" value="ECO:0007669"/>
    <property type="project" value="UniProtKB-UniRule"/>
</dbReference>
<dbReference type="GO" id="GO:0006400">
    <property type="term" value="P:tRNA modification"/>
    <property type="evidence" value="ECO:0007669"/>
    <property type="project" value="TreeGrafter"/>
</dbReference>
<dbReference type="FunFam" id="1.10.20.140:FF:000001">
    <property type="entry name" value="tRNA dimethylallyltransferase"/>
    <property type="match status" value="1"/>
</dbReference>
<dbReference type="Gene3D" id="1.10.20.140">
    <property type="match status" value="1"/>
</dbReference>
<dbReference type="Gene3D" id="3.40.50.300">
    <property type="entry name" value="P-loop containing nucleotide triphosphate hydrolases"/>
    <property type="match status" value="1"/>
</dbReference>
<dbReference type="HAMAP" id="MF_00185">
    <property type="entry name" value="IPP_trans"/>
    <property type="match status" value="1"/>
</dbReference>
<dbReference type="InterPro" id="IPR039657">
    <property type="entry name" value="Dimethylallyltransferase"/>
</dbReference>
<dbReference type="InterPro" id="IPR018022">
    <property type="entry name" value="IPT"/>
</dbReference>
<dbReference type="InterPro" id="IPR027417">
    <property type="entry name" value="P-loop_NTPase"/>
</dbReference>
<dbReference type="NCBIfam" id="TIGR00174">
    <property type="entry name" value="miaA"/>
    <property type="match status" value="1"/>
</dbReference>
<dbReference type="PANTHER" id="PTHR11088">
    <property type="entry name" value="TRNA DIMETHYLALLYLTRANSFERASE"/>
    <property type="match status" value="1"/>
</dbReference>
<dbReference type="PANTHER" id="PTHR11088:SF60">
    <property type="entry name" value="TRNA DIMETHYLALLYLTRANSFERASE"/>
    <property type="match status" value="1"/>
</dbReference>
<dbReference type="Pfam" id="PF01715">
    <property type="entry name" value="IPPT"/>
    <property type="match status" value="1"/>
</dbReference>
<dbReference type="SUPFAM" id="SSF52540">
    <property type="entry name" value="P-loop containing nucleoside triphosphate hydrolases"/>
    <property type="match status" value="2"/>
</dbReference>
<reference key="1">
    <citation type="journal article" date="2009" name="BMC Microbiol.">
        <title>The genome sequence of Geobacter metallireducens: features of metabolism, physiology and regulation common and dissimilar to Geobacter sulfurreducens.</title>
        <authorList>
            <person name="Aklujkar M."/>
            <person name="Krushkal J."/>
            <person name="DiBartolo G."/>
            <person name="Lapidus A."/>
            <person name="Land M.L."/>
            <person name="Lovley D.R."/>
        </authorList>
    </citation>
    <scope>NUCLEOTIDE SEQUENCE [LARGE SCALE GENOMIC DNA]</scope>
    <source>
        <strain>ATCC 53774 / DSM 7210 / GS-15</strain>
    </source>
</reference>